<reference evidence="4" key="1">
    <citation type="journal article" date="2005" name="Nature">
        <title>Genome sequence, comparative analysis and haplotype structure of the domestic dog.</title>
        <authorList>
            <person name="Lindblad-Toh K."/>
            <person name="Wade C.M."/>
            <person name="Mikkelsen T.S."/>
            <person name="Karlsson E.K."/>
            <person name="Jaffe D.B."/>
            <person name="Kamal M."/>
            <person name="Clamp M."/>
            <person name="Chang J.L."/>
            <person name="Kulbokas E.J. III"/>
            <person name="Zody M.C."/>
            <person name="Mauceli E."/>
            <person name="Xie X."/>
            <person name="Breen M."/>
            <person name="Wayne R.K."/>
            <person name="Ostrander E.A."/>
            <person name="Ponting C.P."/>
            <person name="Galibert F."/>
            <person name="Smith D.R."/>
            <person name="deJong P.J."/>
            <person name="Kirkness E.F."/>
            <person name="Alvarez P."/>
            <person name="Biagi T."/>
            <person name="Brockman W."/>
            <person name="Butler J."/>
            <person name="Chin C.-W."/>
            <person name="Cook A."/>
            <person name="Cuff J."/>
            <person name="Daly M.J."/>
            <person name="DeCaprio D."/>
            <person name="Gnerre S."/>
            <person name="Grabherr M."/>
            <person name="Kellis M."/>
            <person name="Kleber M."/>
            <person name="Bardeleben C."/>
            <person name="Goodstadt L."/>
            <person name="Heger A."/>
            <person name="Hitte C."/>
            <person name="Kim L."/>
            <person name="Koepfli K.-P."/>
            <person name="Parker H.G."/>
            <person name="Pollinger J.P."/>
            <person name="Searle S.M.J."/>
            <person name="Sutter N.B."/>
            <person name="Thomas R."/>
            <person name="Webber C."/>
            <person name="Baldwin J."/>
            <person name="Abebe A."/>
            <person name="Abouelleil A."/>
            <person name="Aftuck L."/>
            <person name="Ait-Zahra M."/>
            <person name="Aldredge T."/>
            <person name="Allen N."/>
            <person name="An P."/>
            <person name="Anderson S."/>
            <person name="Antoine C."/>
            <person name="Arachchi H."/>
            <person name="Aslam A."/>
            <person name="Ayotte L."/>
            <person name="Bachantsang P."/>
            <person name="Barry A."/>
            <person name="Bayul T."/>
            <person name="Benamara M."/>
            <person name="Berlin A."/>
            <person name="Bessette D."/>
            <person name="Blitshteyn B."/>
            <person name="Bloom T."/>
            <person name="Blye J."/>
            <person name="Boguslavskiy L."/>
            <person name="Bonnet C."/>
            <person name="Boukhgalter B."/>
            <person name="Brown A."/>
            <person name="Cahill P."/>
            <person name="Calixte N."/>
            <person name="Camarata J."/>
            <person name="Cheshatsang Y."/>
            <person name="Chu J."/>
            <person name="Citroen M."/>
            <person name="Collymore A."/>
            <person name="Cooke P."/>
            <person name="Dawoe T."/>
            <person name="Daza R."/>
            <person name="Decktor K."/>
            <person name="DeGray S."/>
            <person name="Dhargay N."/>
            <person name="Dooley K."/>
            <person name="Dooley K."/>
            <person name="Dorje P."/>
            <person name="Dorjee K."/>
            <person name="Dorris L."/>
            <person name="Duffey N."/>
            <person name="Dupes A."/>
            <person name="Egbiremolen O."/>
            <person name="Elong R."/>
            <person name="Falk J."/>
            <person name="Farina A."/>
            <person name="Faro S."/>
            <person name="Ferguson D."/>
            <person name="Ferreira P."/>
            <person name="Fisher S."/>
            <person name="FitzGerald M."/>
            <person name="Foley K."/>
            <person name="Foley C."/>
            <person name="Franke A."/>
            <person name="Friedrich D."/>
            <person name="Gage D."/>
            <person name="Garber M."/>
            <person name="Gearin G."/>
            <person name="Giannoukos G."/>
            <person name="Goode T."/>
            <person name="Goyette A."/>
            <person name="Graham J."/>
            <person name="Grandbois E."/>
            <person name="Gyaltsen K."/>
            <person name="Hafez N."/>
            <person name="Hagopian D."/>
            <person name="Hagos B."/>
            <person name="Hall J."/>
            <person name="Healy C."/>
            <person name="Hegarty R."/>
            <person name="Honan T."/>
            <person name="Horn A."/>
            <person name="Houde N."/>
            <person name="Hughes L."/>
            <person name="Hunnicutt L."/>
            <person name="Husby M."/>
            <person name="Jester B."/>
            <person name="Jones C."/>
            <person name="Kamat A."/>
            <person name="Kanga B."/>
            <person name="Kells C."/>
            <person name="Khazanovich D."/>
            <person name="Kieu A.C."/>
            <person name="Kisner P."/>
            <person name="Kumar M."/>
            <person name="Lance K."/>
            <person name="Landers T."/>
            <person name="Lara M."/>
            <person name="Lee W."/>
            <person name="Leger J.-P."/>
            <person name="Lennon N."/>
            <person name="Leuper L."/>
            <person name="LeVine S."/>
            <person name="Liu J."/>
            <person name="Liu X."/>
            <person name="Lokyitsang Y."/>
            <person name="Lokyitsang T."/>
            <person name="Lui A."/>
            <person name="Macdonald J."/>
            <person name="Major J."/>
            <person name="Marabella R."/>
            <person name="Maru K."/>
            <person name="Matthews C."/>
            <person name="McDonough S."/>
            <person name="Mehta T."/>
            <person name="Meldrim J."/>
            <person name="Melnikov A."/>
            <person name="Meneus L."/>
            <person name="Mihalev A."/>
            <person name="Mihova T."/>
            <person name="Miller K."/>
            <person name="Mittelman R."/>
            <person name="Mlenga V."/>
            <person name="Mulrain L."/>
            <person name="Munson G."/>
            <person name="Navidi A."/>
            <person name="Naylor J."/>
            <person name="Nguyen T."/>
            <person name="Nguyen N."/>
            <person name="Nguyen C."/>
            <person name="Nguyen T."/>
            <person name="Nicol R."/>
            <person name="Norbu N."/>
            <person name="Norbu C."/>
            <person name="Novod N."/>
            <person name="Nyima T."/>
            <person name="Olandt P."/>
            <person name="O'Neill B."/>
            <person name="O'Neill K."/>
            <person name="Osman S."/>
            <person name="Oyono L."/>
            <person name="Patti C."/>
            <person name="Perrin D."/>
            <person name="Phunkhang P."/>
            <person name="Pierre F."/>
            <person name="Priest M."/>
            <person name="Rachupka A."/>
            <person name="Raghuraman S."/>
            <person name="Rameau R."/>
            <person name="Ray V."/>
            <person name="Raymond C."/>
            <person name="Rege F."/>
            <person name="Rise C."/>
            <person name="Rogers J."/>
            <person name="Rogov P."/>
            <person name="Sahalie J."/>
            <person name="Settipalli S."/>
            <person name="Sharpe T."/>
            <person name="Shea T."/>
            <person name="Sheehan M."/>
            <person name="Sherpa N."/>
            <person name="Shi J."/>
            <person name="Shih D."/>
            <person name="Sloan J."/>
            <person name="Smith C."/>
            <person name="Sparrow T."/>
            <person name="Stalker J."/>
            <person name="Stange-Thomann N."/>
            <person name="Stavropoulos S."/>
            <person name="Stone C."/>
            <person name="Stone S."/>
            <person name="Sykes S."/>
            <person name="Tchuinga P."/>
            <person name="Tenzing P."/>
            <person name="Tesfaye S."/>
            <person name="Thoulutsang D."/>
            <person name="Thoulutsang Y."/>
            <person name="Topham K."/>
            <person name="Topping I."/>
            <person name="Tsamla T."/>
            <person name="Vassiliev H."/>
            <person name="Venkataraman V."/>
            <person name="Vo A."/>
            <person name="Wangchuk T."/>
            <person name="Wangdi T."/>
            <person name="Weiand M."/>
            <person name="Wilkinson J."/>
            <person name="Wilson A."/>
            <person name="Yadav S."/>
            <person name="Yang S."/>
            <person name="Yang X."/>
            <person name="Young G."/>
            <person name="Yu Q."/>
            <person name="Zainoun J."/>
            <person name="Zembek L."/>
            <person name="Zimmer A."/>
            <person name="Lander E.S."/>
        </authorList>
    </citation>
    <scope>NUCLEOTIDE SEQUENCE [LARGE SCALE GENOMIC DNA]</scope>
    <source>
        <strain evidence="4">Boxer</strain>
    </source>
</reference>
<feature type="chain" id="PRO_0000446639" description="Alpha-ketoglutarate-dependent dioxygenase FTO">
    <location>
        <begin position="1"/>
        <end position="506"/>
    </location>
</feature>
<feature type="region of interest" description="Fe2OG dioxygenase domain" evidence="2">
    <location>
        <begin position="32"/>
        <end position="326"/>
    </location>
</feature>
<feature type="region of interest" description="Loop L1; predicted to block binding of double-stranded DNA or RNA" evidence="2">
    <location>
        <begin position="212"/>
        <end position="223"/>
    </location>
</feature>
<feature type="binding site" evidence="2">
    <location>
        <position position="96"/>
    </location>
    <ligand>
        <name>substrate</name>
    </ligand>
</feature>
<feature type="binding site" evidence="2">
    <location>
        <position position="108"/>
    </location>
    <ligand>
        <name>substrate</name>
    </ligand>
</feature>
<feature type="binding site" evidence="2">
    <location>
        <position position="204"/>
    </location>
    <ligand>
        <name>2-oxoglutarate</name>
        <dbReference type="ChEBI" id="CHEBI:16810"/>
    </ligand>
</feature>
<feature type="binding site" evidence="2">
    <location>
        <begin position="230"/>
        <end position="233"/>
    </location>
    <ligand>
        <name>substrate</name>
    </ligand>
</feature>
<feature type="binding site" evidence="2">
    <location>
        <position position="230"/>
    </location>
    <ligand>
        <name>Fe cation</name>
        <dbReference type="ChEBI" id="CHEBI:24875"/>
        <note>catalytic</note>
    </ligand>
</feature>
<feature type="binding site" evidence="2">
    <location>
        <position position="232"/>
    </location>
    <ligand>
        <name>Fe cation</name>
        <dbReference type="ChEBI" id="CHEBI:24875"/>
        <note>catalytic</note>
    </ligand>
</feature>
<feature type="binding site" evidence="2">
    <location>
        <position position="294"/>
    </location>
    <ligand>
        <name>2-oxoglutarate</name>
        <dbReference type="ChEBI" id="CHEBI:16810"/>
    </ligand>
</feature>
<feature type="binding site" evidence="2">
    <location>
        <position position="306"/>
    </location>
    <ligand>
        <name>Fe cation</name>
        <dbReference type="ChEBI" id="CHEBI:24875"/>
        <note>catalytic</note>
    </ligand>
</feature>
<feature type="binding site" evidence="2">
    <location>
        <begin position="315"/>
        <end position="317"/>
    </location>
    <ligand>
        <name>2-oxoglutarate</name>
        <dbReference type="ChEBI" id="CHEBI:16810"/>
    </ligand>
</feature>
<feature type="binding site" evidence="2">
    <location>
        <position position="319"/>
    </location>
    <ligand>
        <name>2-oxoglutarate</name>
        <dbReference type="ChEBI" id="CHEBI:16810"/>
    </ligand>
</feature>
<feature type="binding site" evidence="2">
    <location>
        <position position="321"/>
    </location>
    <ligand>
        <name>2-oxoglutarate</name>
        <dbReference type="ChEBI" id="CHEBI:16810"/>
    </ligand>
</feature>
<feature type="modified residue" description="Phosphothreonine" evidence="2">
    <location>
        <position position="4"/>
    </location>
</feature>
<feature type="modified residue" description="N6-acetyllysine" evidence="2">
    <location>
        <position position="215"/>
    </location>
</feature>
<keyword id="KW-0007">Acetylation</keyword>
<keyword id="KW-0963">Cytoplasm</keyword>
<keyword id="KW-0223">Dioxygenase</keyword>
<keyword id="KW-0408">Iron</keyword>
<keyword id="KW-0479">Metal-binding</keyword>
<keyword id="KW-0539">Nucleus</keyword>
<keyword id="KW-0560">Oxidoreductase</keyword>
<keyword id="KW-0597">Phosphoprotein</keyword>
<keyword id="KW-1185">Reference proteome</keyword>
<keyword id="KW-0808">Transferase</keyword>
<proteinExistence type="inferred from homology"/>
<protein>
    <recommendedName>
        <fullName evidence="2">Alpha-ketoglutarate-dependent dioxygenase FTO</fullName>
    </recommendedName>
    <alternativeName>
        <fullName evidence="2">Fat mass and obesity-associated protein</fullName>
    </alternativeName>
    <alternativeName>
        <fullName evidence="2">U6 small nuclear RNA (2'-O-methyladenosine-N(6)-)-demethylase FTO</fullName>
        <ecNumber evidence="2">1.14.11.-</ecNumber>
    </alternativeName>
    <alternativeName>
        <fullName evidence="2">U6 small nuclear RNA N(6)-methyladenosine-demethylase FTO</fullName>
        <ecNumber evidence="2">1.14.11.-</ecNumber>
    </alternativeName>
    <alternativeName>
        <fullName evidence="2">mRNA (2'-O-methyladenosine-N(6)-)-demethylase FTO</fullName>
        <shortName evidence="2">m6A(m)-demethylase FTO</shortName>
        <ecNumber evidence="2">1.14.11.-</ecNumber>
    </alternativeName>
    <alternativeName>
        <fullName evidence="2">mRNA N(6)-methyladenosine demethylase FTO</fullName>
        <ecNumber evidence="2">1.14.11.53</ecNumber>
    </alternativeName>
    <alternativeName>
        <fullName>tRNA N1-methyl adenine demethylase FTO</fullName>
        <ecNumber evidence="2">1.14.11.-</ecNumber>
    </alternativeName>
</protein>
<organism evidence="4">
    <name type="scientific">Canis lupus familiaris</name>
    <name type="common">Dog</name>
    <name type="synonym">Canis familiaris</name>
    <dbReference type="NCBI Taxonomy" id="9615"/>
    <lineage>
        <taxon>Eukaryota</taxon>
        <taxon>Metazoa</taxon>
        <taxon>Chordata</taxon>
        <taxon>Craniata</taxon>
        <taxon>Vertebrata</taxon>
        <taxon>Euteleostomi</taxon>
        <taxon>Mammalia</taxon>
        <taxon>Eutheria</taxon>
        <taxon>Laurasiatheria</taxon>
        <taxon>Carnivora</taxon>
        <taxon>Caniformia</taxon>
        <taxon>Canidae</taxon>
        <taxon>Canis</taxon>
    </lineage>
</organism>
<gene>
    <name type="primary">FTO</name>
</gene>
<sequence>MKRTPTAEEREREAKKLRLLEELEDTWLPYLTPKDDEFYQQWQLKYPKLILREAGSVPEDLHKEVQEAFLTLHKHGCFFRDLVRIQGKDLLTPVSRILIGNPGCTYKYLNTRLFTVPWPVKGASTKYDEAGIAAACQTFLKLNDYLQIETIQALEELACKEKSNIDAVPVCIGPDFPRVGMGSFDGQDELDIKNRAAYNVTLLNFMDPQKMPYLKEEPYFGMGKMAVSWHHDENLVERSAVAVYSYSCEGPEEESEDDPQLEGRDPDTWHVGFKISWDIETPGLAIPLHQGDCYFMLDDLNATHQHCVLAGLPPRFSSTHRVAECSTGTLDYILQRCQLALQNVRDEADNGDVSLKSFEPVVLKQGEEIHNEVEFEWLRQYWFQGNRYRKCTDWWCQPMTQLEGLWKKMEGVTNAVLHEVRREGVPVEQRNEILTAILALLTTRQNLRREWHARCQSRIARTLPVDQKPECRPYWEKDDPSMPLPFDLTDIVSELRGEFGTLPWSA</sequence>
<name>FTO_CANLF</name>
<evidence type="ECO:0000250" key="1">
    <source>
        <dbReference type="UniProtKB" id="Q8BGW1"/>
    </source>
</evidence>
<evidence type="ECO:0000250" key="2">
    <source>
        <dbReference type="UniProtKB" id="Q9C0B1"/>
    </source>
</evidence>
<evidence type="ECO:0000305" key="3"/>
<evidence type="ECO:0000312" key="4">
    <source>
        <dbReference type="Proteomes" id="UP000002254"/>
    </source>
</evidence>
<dbReference type="EC" id="1.14.11.-" evidence="2"/>
<dbReference type="EC" id="1.14.11.53" evidence="2"/>
<dbReference type="EMBL" id="AAEX03001602">
    <property type="status" value="NOT_ANNOTATED_CDS"/>
    <property type="molecule type" value="Genomic_DNA"/>
</dbReference>
<dbReference type="EMBL" id="AAEX03001603">
    <property type="status" value="NOT_ANNOTATED_CDS"/>
    <property type="molecule type" value="Genomic_DNA"/>
</dbReference>
<dbReference type="SMR" id="F1PLN3"/>
<dbReference type="FunCoup" id="F1PLN3">
    <property type="interactions" value="768"/>
</dbReference>
<dbReference type="STRING" id="9615.ENSCAFP00000058279"/>
<dbReference type="PaxDb" id="9612-ENSCAFP00000013919"/>
<dbReference type="eggNOG" id="ENOG502QR31">
    <property type="taxonomic scope" value="Eukaryota"/>
</dbReference>
<dbReference type="HOGENOM" id="CLU_041676_0_0_1"/>
<dbReference type="InParanoid" id="F1PLN3"/>
<dbReference type="OrthoDB" id="46257at2759"/>
<dbReference type="TreeFam" id="TF333296"/>
<dbReference type="Proteomes" id="UP000002254">
    <property type="component" value="Unplaced"/>
</dbReference>
<dbReference type="Proteomes" id="UP000694429">
    <property type="component" value="Unplaced"/>
</dbReference>
<dbReference type="Proteomes" id="UP000694542">
    <property type="component" value="Unplaced"/>
</dbReference>
<dbReference type="Proteomes" id="UP000805418">
    <property type="component" value="Unplaced"/>
</dbReference>
<dbReference type="GO" id="GO:0005737">
    <property type="term" value="C:cytoplasm"/>
    <property type="evidence" value="ECO:0007669"/>
    <property type="project" value="UniProtKB-SubCell"/>
</dbReference>
<dbReference type="GO" id="GO:0016607">
    <property type="term" value="C:nuclear speck"/>
    <property type="evidence" value="ECO:0007669"/>
    <property type="project" value="UniProtKB-SubCell"/>
</dbReference>
<dbReference type="GO" id="GO:0035516">
    <property type="term" value="F:broad specificity oxidative DNA demethylase activity"/>
    <property type="evidence" value="ECO:0000318"/>
    <property type="project" value="GO_Central"/>
</dbReference>
<dbReference type="GO" id="GO:0008198">
    <property type="term" value="F:ferrous iron binding"/>
    <property type="evidence" value="ECO:0000318"/>
    <property type="project" value="GO_Central"/>
</dbReference>
<dbReference type="GO" id="GO:1990931">
    <property type="term" value="F:mRNA N6-methyladenosine dioxygenase activity"/>
    <property type="evidence" value="ECO:0000318"/>
    <property type="project" value="GO_Central"/>
</dbReference>
<dbReference type="GO" id="GO:0016740">
    <property type="term" value="F:transferase activity"/>
    <property type="evidence" value="ECO:0007669"/>
    <property type="project" value="UniProtKB-KW"/>
</dbReference>
<dbReference type="GO" id="GO:0006307">
    <property type="term" value="P:DNA alkylation repair"/>
    <property type="evidence" value="ECO:0007669"/>
    <property type="project" value="InterPro"/>
</dbReference>
<dbReference type="GO" id="GO:0040014">
    <property type="term" value="P:regulation of multicellular organism growth"/>
    <property type="evidence" value="ECO:0007669"/>
    <property type="project" value="InterPro"/>
</dbReference>
<dbReference type="GO" id="GO:0042245">
    <property type="term" value="P:RNA repair"/>
    <property type="evidence" value="ECO:0007669"/>
    <property type="project" value="InterPro"/>
</dbReference>
<dbReference type="FunFam" id="1.20.58.1470:FF:000001">
    <property type="entry name" value="FTO, alpha-ketoglutarate dependent dioxygenase"/>
    <property type="match status" value="1"/>
</dbReference>
<dbReference type="FunFam" id="2.60.120.590:FF:000001">
    <property type="entry name" value="FTO, alpha-ketoglutarate dependent dioxygenase"/>
    <property type="match status" value="1"/>
</dbReference>
<dbReference type="Gene3D" id="2.60.120.590">
    <property type="entry name" value="Alpha-ketoglutarate-dependent dioxygenase AlkB-like"/>
    <property type="match status" value="1"/>
</dbReference>
<dbReference type="Gene3D" id="1.20.58.1470">
    <property type="entry name" value="FTO C-terminal domain"/>
    <property type="match status" value="1"/>
</dbReference>
<dbReference type="InterPro" id="IPR037151">
    <property type="entry name" value="AlkB-like_sf"/>
</dbReference>
<dbReference type="InterPro" id="IPR032868">
    <property type="entry name" value="FTO"/>
</dbReference>
<dbReference type="InterPro" id="IPR024366">
    <property type="entry name" value="FTO_C"/>
</dbReference>
<dbReference type="InterPro" id="IPR038413">
    <property type="entry name" value="FTO_C_sf"/>
</dbReference>
<dbReference type="InterPro" id="IPR024367">
    <property type="entry name" value="FTO_cat_dom"/>
</dbReference>
<dbReference type="PANTHER" id="PTHR31291">
    <property type="entry name" value="ALPHA-KETOGLUTARATE-DEPENDENT DIOXYGENASE FTO"/>
    <property type="match status" value="1"/>
</dbReference>
<dbReference type="PANTHER" id="PTHR31291:SF2">
    <property type="entry name" value="ALPHA-KETOGLUTARATE-DEPENDENT DIOXYGENASE FTO"/>
    <property type="match status" value="1"/>
</dbReference>
<dbReference type="Pfam" id="PF12934">
    <property type="entry name" value="FTO_CTD"/>
    <property type="match status" value="1"/>
</dbReference>
<dbReference type="Pfam" id="PF12933">
    <property type="entry name" value="FTO_NTD"/>
    <property type="match status" value="1"/>
</dbReference>
<dbReference type="SMART" id="SM01223">
    <property type="entry name" value="FTO_NTD"/>
    <property type="match status" value="1"/>
</dbReference>
<accession>F1PLN3</accession>
<comment type="function">
    <text evidence="1 2">RNA demethylase that mediates oxidative demethylation of different RNA species, such as mRNAs, tRNAs and snRNAs, and acts as a regulator of fat mass, adipogenesis and energy homeostasis. Specifically demethylates N(6)-methyladenosine (m6A) RNA, the most prevalent internal modification of messenger RNA (mRNA) in higher eukaryotes. M6A demethylation by FTO affects mRNA expression and stability. Also able to demethylate m6A in U6 small nuclear RNA (snRNA). Mediates demethylation of N(6),2'-O-dimethyladenosine cap (m6A(m)), by demethylating the N(6)-methyladenosine at the second transcribed position of mRNAs and U6 snRNA. Demethylation of m6A(m) in the 5'-cap by FTO affects mRNA stability by promoting susceptibility to decapping. Also acts as a tRNA demethylase by removing N(1)-methyladenine from various tRNAs. Has no activity towards 1-methylguanine. Has no detectable activity towards double-stranded DNA. Also able to repair alkylated DNA and RNA by oxidative demethylation: demethylates single-stranded RNA containing 3-methyluracil, single-stranded DNA containing 3-methylthymine and has low demethylase activity towards single-stranded DNA containing 1-methyladenine or 3-methylcytosine. Ability to repair alkylated DNA and RNA is however unsure in vivo. Involved in the regulation of fat mass, adipogenesis and body weight, thereby contributing to the regulation of body size and body fat accumulation. Involved in the regulation of thermogenesis and the control of adipocyte differentiation into brown or white fat cells. Regulates activity of the dopaminergic midbrain circuitry via its ability to demethylate m6A in mRNAs. Plays an oncogenic role in a number of acute myeloid leukemias by enhancing leukemic oncogene-mediated cell transformation: acts by mediating m6A demethylation of target transcripts such as MYC, CEBPA, ASB2 and RARA, leading to promote their expression.</text>
</comment>
<comment type="catalytic activity">
    <reaction evidence="2">
        <text>a 5'-end (N(7)-methyl 5'-triphosphoguanosine)-(N(6),2'-O-dimethyladenosine) in mRNA + 2-oxoglutarate + O2 = a 5'-end (N(7)-methyl 5'-triphosphoguanosine)-(2'-O-methyladenosine) in mRNA + formaldehyde + succinate + CO2</text>
        <dbReference type="Rhea" id="RHEA:57896"/>
        <dbReference type="Rhea" id="RHEA-COMP:11518"/>
        <dbReference type="Rhea" id="RHEA-COMP:11519"/>
        <dbReference type="ChEBI" id="CHEBI:15379"/>
        <dbReference type="ChEBI" id="CHEBI:16526"/>
        <dbReference type="ChEBI" id="CHEBI:16810"/>
        <dbReference type="ChEBI" id="CHEBI:16842"/>
        <dbReference type="ChEBI" id="CHEBI:30031"/>
        <dbReference type="ChEBI" id="CHEBI:85958"/>
        <dbReference type="ChEBI" id="CHEBI:85959"/>
    </reaction>
</comment>
<comment type="catalytic activity">
    <reaction evidence="2">
        <text>an N(6)-methyladenosine in mRNA + 2-oxoglutarate + O2 = an adenosine in mRNA + formaldehyde + succinate + CO2</text>
        <dbReference type="Rhea" id="RHEA:49520"/>
        <dbReference type="Rhea" id="RHEA-COMP:12414"/>
        <dbReference type="Rhea" id="RHEA-COMP:12417"/>
        <dbReference type="ChEBI" id="CHEBI:15379"/>
        <dbReference type="ChEBI" id="CHEBI:16526"/>
        <dbReference type="ChEBI" id="CHEBI:16810"/>
        <dbReference type="ChEBI" id="CHEBI:16842"/>
        <dbReference type="ChEBI" id="CHEBI:30031"/>
        <dbReference type="ChEBI" id="CHEBI:74411"/>
        <dbReference type="ChEBI" id="CHEBI:74449"/>
        <dbReference type="EC" id="1.14.11.53"/>
    </reaction>
</comment>
<comment type="catalytic activity">
    <reaction evidence="2">
        <text>N(6)-methyladenosine in U6 snRNA + 2-oxoglutarate + O2 = adenosine in U6 snRNA + formaldehyde + succinate + CO2</text>
        <dbReference type="Rhea" id="RHEA:57900"/>
        <dbReference type="Rhea" id="RHEA-COMP:13573"/>
        <dbReference type="Rhea" id="RHEA-COMP:13574"/>
        <dbReference type="ChEBI" id="CHEBI:15379"/>
        <dbReference type="ChEBI" id="CHEBI:16526"/>
        <dbReference type="ChEBI" id="CHEBI:16810"/>
        <dbReference type="ChEBI" id="CHEBI:16842"/>
        <dbReference type="ChEBI" id="CHEBI:30031"/>
        <dbReference type="ChEBI" id="CHEBI:74411"/>
        <dbReference type="ChEBI" id="CHEBI:74449"/>
    </reaction>
</comment>
<comment type="catalytic activity">
    <reaction evidence="2">
        <text>a 5'-end (N(7)-methyl 5'-triphosphoguanosine)-(N(6),2'-O-dimethyladenosine) in U6 snRNA + 2-oxoglutarate + O2 = a 5'-end (N(7)-methyl 5'-triphosphoguanosine)-(2'-O-methyladenosine) in U6 snRNA + formaldehyde + succinate + CO2</text>
        <dbReference type="Rhea" id="RHEA:57904"/>
        <dbReference type="Rhea" id="RHEA-COMP:15030"/>
        <dbReference type="Rhea" id="RHEA-COMP:15031"/>
        <dbReference type="ChEBI" id="CHEBI:15379"/>
        <dbReference type="ChEBI" id="CHEBI:16526"/>
        <dbReference type="ChEBI" id="CHEBI:16810"/>
        <dbReference type="ChEBI" id="CHEBI:16842"/>
        <dbReference type="ChEBI" id="CHEBI:30031"/>
        <dbReference type="ChEBI" id="CHEBI:85958"/>
        <dbReference type="ChEBI" id="CHEBI:85959"/>
    </reaction>
</comment>
<comment type="catalytic activity">
    <reaction evidence="2">
        <text>an N(1)-methyladenosine in tRNA + 2-oxoglutarate + O2 = an adenosine in tRNA + formaldehyde + succinate + CO2</text>
        <dbReference type="Rhea" id="RHEA:54576"/>
        <dbReference type="Rhea" id="RHEA-COMP:10242"/>
        <dbReference type="Rhea" id="RHEA-COMP:12312"/>
        <dbReference type="ChEBI" id="CHEBI:15379"/>
        <dbReference type="ChEBI" id="CHEBI:16526"/>
        <dbReference type="ChEBI" id="CHEBI:16810"/>
        <dbReference type="ChEBI" id="CHEBI:16842"/>
        <dbReference type="ChEBI" id="CHEBI:30031"/>
        <dbReference type="ChEBI" id="CHEBI:74411"/>
        <dbReference type="ChEBI" id="CHEBI:74491"/>
    </reaction>
</comment>
<comment type="cofactor">
    <cofactor evidence="2">
        <name>Fe(2+)</name>
        <dbReference type="ChEBI" id="CHEBI:29033"/>
    </cofactor>
    <text evidence="2">Binds 1 Fe(2+) ion per subunit.</text>
</comment>
<comment type="subunit">
    <text evidence="1">Monomer. May also exist as homodimer.</text>
</comment>
<comment type="subcellular location">
    <subcellularLocation>
        <location evidence="2">Nucleus</location>
    </subcellularLocation>
    <subcellularLocation>
        <location evidence="2">Nucleus speckle</location>
    </subcellularLocation>
    <subcellularLocation>
        <location evidence="2">Cytoplasm</location>
    </subcellularLocation>
    <text evidence="2">Localizes mainly in the nucleus, where it is able to demethylate N(6)-methyladenosine (m6A) and N(6),2'-O-dimethyladenosine cap (m6A(m)) in U6 small nuclear RNA (snRNA), N(1)-methyladenine from tRNAs and internal m6A in mRNAs. In the cytoplasm, mediates demethylation of m6A and m6A(m) in mRNAs and N(1)-methyladenine from tRNAs.</text>
</comment>
<comment type="domain">
    <text evidence="2">The 3D-structure of the Fe2OG dioxygenase domain is similar to that of the Fe2OG dioxygenase domain found in the bacterial DNA repair dioxygenase alkB and its mammalian orthologs, but sequence similarity is very low. As a consequence, the domain is not detected by protein signature databases.</text>
</comment>
<comment type="similarity">
    <text evidence="3">Belongs to the fto family.</text>
</comment>